<reference key="1">
    <citation type="journal article" date="2008" name="PLoS Genet.">
        <title>Complete genome sequence of the complex carbohydrate-degrading marine bacterium, Saccharophagus degradans strain 2-40 T.</title>
        <authorList>
            <person name="Weiner R.M."/>
            <person name="Taylor L.E. II"/>
            <person name="Henrissat B."/>
            <person name="Hauser L."/>
            <person name="Land M."/>
            <person name="Coutinho P.M."/>
            <person name="Rancurel C."/>
            <person name="Saunders E.H."/>
            <person name="Longmire A.G."/>
            <person name="Zhang H."/>
            <person name="Bayer E.A."/>
            <person name="Gilbert H.J."/>
            <person name="Larimer F."/>
            <person name="Zhulin I.B."/>
            <person name="Ekborg N.A."/>
            <person name="Lamed R."/>
            <person name="Richardson P.M."/>
            <person name="Borovok I."/>
            <person name="Hutcheson S."/>
        </authorList>
    </citation>
    <scope>NUCLEOTIDE SEQUENCE [LARGE SCALE GENOMIC DNA]</scope>
    <source>
        <strain>2-40 / ATCC 43961 / DSM 17024</strain>
    </source>
</reference>
<accession>Q21EC9</accession>
<comment type="function">
    <text evidence="1">Essential for recycling GMP and indirectly, cGMP.</text>
</comment>
<comment type="catalytic activity">
    <reaction evidence="1">
        <text>GMP + ATP = GDP + ADP</text>
        <dbReference type="Rhea" id="RHEA:20780"/>
        <dbReference type="ChEBI" id="CHEBI:30616"/>
        <dbReference type="ChEBI" id="CHEBI:58115"/>
        <dbReference type="ChEBI" id="CHEBI:58189"/>
        <dbReference type="ChEBI" id="CHEBI:456216"/>
        <dbReference type="EC" id="2.7.4.8"/>
    </reaction>
</comment>
<comment type="subcellular location">
    <subcellularLocation>
        <location evidence="1">Cytoplasm</location>
    </subcellularLocation>
</comment>
<comment type="similarity">
    <text evidence="1">Belongs to the guanylate kinase family.</text>
</comment>
<comment type="sequence caution" evidence="2">
    <conflict type="erroneous initiation">
        <sequence resource="EMBL-CDS" id="ABD82950"/>
    </conflict>
</comment>
<evidence type="ECO:0000255" key="1">
    <source>
        <dbReference type="HAMAP-Rule" id="MF_00328"/>
    </source>
</evidence>
<evidence type="ECO:0000305" key="2"/>
<dbReference type="EC" id="2.7.4.8" evidence="1"/>
<dbReference type="EMBL" id="CP000282">
    <property type="protein sequence ID" value="ABD82950.1"/>
    <property type="status" value="ALT_INIT"/>
    <property type="molecule type" value="Genomic_DNA"/>
</dbReference>
<dbReference type="RefSeq" id="WP_041326049.1">
    <property type="nucleotide sequence ID" value="NC_007912.1"/>
</dbReference>
<dbReference type="SMR" id="Q21EC9"/>
<dbReference type="STRING" id="203122.Sde_3695"/>
<dbReference type="GeneID" id="98615305"/>
<dbReference type="KEGG" id="sde:Sde_3695"/>
<dbReference type="eggNOG" id="COG0194">
    <property type="taxonomic scope" value="Bacteria"/>
</dbReference>
<dbReference type="HOGENOM" id="CLU_001715_1_2_6"/>
<dbReference type="OrthoDB" id="9808150at2"/>
<dbReference type="Proteomes" id="UP000001947">
    <property type="component" value="Chromosome"/>
</dbReference>
<dbReference type="GO" id="GO:0005829">
    <property type="term" value="C:cytosol"/>
    <property type="evidence" value="ECO:0007669"/>
    <property type="project" value="TreeGrafter"/>
</dbReference>
<dbReference type="GO" id="GO:0005524">
    <property type="term" value="F:ATP binding"/>
    <property type="evidence" value="ECO:0007669"/>
    <property type="project" value="UniProtKB-UniRule"/>
</dbReference>
<dbReference type="GO" id="GO:0004385">
    <property type="term" value="F:guanylate kinase activity"/>
    <property type="evidence" value="ECO:0007669"/>
    <property type="project" value="UniProtKB-UniRule"/>
</dbReference>
<dbReference type="CDD" id="cd00071">
    <property type="entry name" value="GMPK"/>
    <property type="match status" value="1"/>
</dbReference>
<dbReference type="FunFam" id="3.30.63.10:FF:000002">
    <property type="entry name" value="Guanylate kinase 1"/>
    <property type="match status" value="1"/>
</dbReference>
<dbReference type="Gene3D" id="3.30.63.10">
    <property type="entry name" value="Guanylate Kinase phosphate binding domain"/>
    <property type="match status" value="1"/>
</dbReference>
<dbReference type="Gene3D" id="3.40.50.300">
    <property type="entry name" value="P-loop containing nucleotide triphosphate hydrolases"/>
    <property type="match status" value="1"/>
</dbReference>
<dbReference type="HAMAP" id="MF_00328">
    <property type="entry name" value="Guanylate_kinase"/>
    <property type="match status" value="1"/>
</dbReference>
<dbReference type="InterPro" id="IPR008145">
    <property type="entry name" value="GK/Ca_channel_bsu"/>
</dbReference>
<dbReference type="InterPro" id="IPR008144">
    <property type="entry name" value="Guanylate_kin-like_dom"/>
</dbReference>
<dbReference type="InterPro" id="IPR017665">
    <property type="entry name" value="Guanylate_kinase"/>
</dbReference>
<dbReference type="InterPro" id="IPR020590">
    <property type="entry name" value="Guanylate_kinase_CS"/>
</dbReference>
<dbReference type="InterPro" id="IPR027417">
    <property type="entry name" value="P-loop_NTPase"/>
</dbReference>
<dbReference type="NCBIfam" id="TIGR03263">
    <property type="entry name" value="guanyl_kin"/>
    <property type="match status" value="1"/>
</dbReference>
<dbReference type="PANTHER" id="PTHR23117:SF13">
    <property type="entry name" value="GUANYLATE KINASE"/>
    <property type="match status" value="1"/>
</dbReference>
<dbReference type="PANTHER" id="PTHR23117">
    <property type="entry name" value="GUANYLATE KINASE-RELATED"/>
    <property type="match status" value="1"/>
</dbReference>
<dbReference type="Pfam" id="PF00625">
    <property type="entry name" value="Guanylate_kin"/>
    <property type="match status" value="1"/>
</dbReference>
<dbReference type="SMART" id="SM00072">
    <property type="entry name" value="GuKc"/>
    <property type="match status" value="1"/>
</dbReference>
<dbReference type="SUPFAM" id="SSF52540">
    <property type="entry name" value="P-loop containing nucleoside triphosphate hydrolases"/>
    <property type="match status" value="1"/>
</dbReference>
<dbReference type="PROSITE" id="PS00856">
    <property type="entry name" value="GUANYLATE_KINASE_1"/>
    <property type="match status" value="1"/>
</dbReference>
<dbReference type="PROSITE" id="PS50052">
    <property type="entry name" value="GUANYLATE_KINASE_2"/>
    <property type="match status" value="1"/>
</dbReference>
<gene>
    <name evidence="1" type="primary">gmk</name>
    <name type="ordered locus">Sde_3695</name>
</gene>
<sequence length="205" mass="22803">MTPTGTLYTVSAPSGAGKTSLVSALIDTTSNIMVSVSHTTRAKRPGEQEGVNYHFVSHEQFATMVENNAFLEHAQVFTNFYGTSKQWVEDTLAKGIDVILEIDWQGAQQVRKLIPAAKSVFILPPSRECLRERLTGRGQDDESVIDARMAEAKSEISHYVEAQYLIVNDDFDTALTEFRSIVVANRLALEKQQDKHQSLLESLLS</sequence>
<organism>
    <name type="scientific">Saccharophagus degradans (strain 2-40 / ATCC 43961 / DSM 17024)</name>
    <dbReference type="NCBI Taxonomy" id="203122"/>
    <lineage>
        <taxon>Bacteria</taxon>
        <taxon>Pseudomonadati</taxon>
        <taxon>Pseudomonadota</taxon>
        <taxon>Gammaproteobacteria</taxon>
        <taxon>Cellvibrionales</taxon>
        <taxon>Cellvibrionaceae</taxon>
        <taxon>Saccharophagus</taxon>
    </lineage>
</organism>
<keyword id="KW-0067">ATP-binding</keyword>
<keyword id="KW-0963">Cytoplasm</keyword>
<keyword id="KW-0418">Kinase</keyword>
<keyword id="KW-0547">Nucleotide-binding</keyword>
<keyword id="KW-1185">Reference proteome</keyword>
<keyword id="KW-0808">Transferase</keyword>
<feature type="chain" id="PRO_0000266392" description="Guanylate kinase">
    <location>
        <begin position="1"/>
        <end position="205"/>
    </location>
</feature>
<feature type="domain" description="Guanylate kinase-like" evidence="1">
    <location>
        <begin position="5"/>
        <end position="183"/>
    </location>
</feature>
<feature type="binding site" evidence="1">
    <location>
        <begin position="12"/>
        <end position="19"/>
    </location>
    <ligand>
        <name>ATP</name>
        <dbReference type="ChEBI" id="CHEBI:30616"/>
    </ligand>
</feature>
<protein>
    <recommendedName>
        <fullName evidence="1">Guanylate kinase</fullName>
        <ecNumber evidence="1">2.7.4.8</ecNumber>
    </recommendedName>
    <alternativeName>
        <fullName evidence="1">GMP kinase</fullName>
    </alternativeName>
</protein>
<proteinExistence type="inferred from homology"/>
<name>KGUA_SACD2</name>